<feature type="chain" id="PRO_0000147402" description="Universal stress protein A">
    <location>
        <begin position="1"/>
        <end position="143"/>
    </location>
</feature>
<accession>P60004</accession>
<sequence>MAYKHILVAVDLSPESQVLVRKAVSMAKPDNAKVSLIHVDVNYSDLYTGLIDVNLGDMQQRISEETRSALKALSADSAYDIQETLSGSGDLGQVLVDAIKKYGIDMVVCGHHQDFWSKLMSSARQLINTVHVDMLIVPLRDDE</sequence>
<reference key="1">
    <citation type="journal article" date="2003" name="Nat. Biotechnol.">
        <title>The genome sequence of the entomopathogenic bacterium Photorhabdus luminescens.</title>
        <authorList>
            <person name="Duchaud E."/>
            <person name="Rusniok C."/>
            <person name="Frangeul L."/>
            <person name="Buchrieser C."/>
            <person name="Givaudan A."/>
            <person name="Taourit S."/>
            <person name="Bocs S."/>
            <person name="Boursaux-Eude C."/>
            <person name="Chandler M."/>
            <person name="Charles J.-F."/>
            <person name="Dassa E."/>
            <person name="Derose R."/>
            <person name="Derzelle S."/>
            <person name="Freyssinet G."/>
            <person name="Gaudriault S."/>
            <person name="Medigue C."/>
            <person name="Lanois A."/>
            <person name="Powell K."/>
            <person name="Siguier P."/>
            <person name="Vincent R."/>
            <person name="Wingate V."/>
            <person name="Zouine M."/>
            <person name="Glaser P."/>
            <person name="Boemare N."/>
            <person name="Danchin A."/>
            <person name="Kunst F."/>
        </authorList>
    </citation>
    <scope>NUCLEOTIDE SEQUENCE [LARGE SCALE GENOMIC DNA]</scope>
    <source>
        <strain>DSM 15139 / CIP 105565 / TT01</strain>
    </source>
</reference>
<dbReference type="EMBL" id="BX571859">
    <property type="protein sequence ID" value="CAE12416.1"/>
    <property type="molecule type" value="Genomic_DNA"/>
</dbReference>
<dbReference type="RefSeq" id="WP_011144527.1">
    <property type="nucleotide sequence ID" value="NC_005126.1"/>
</dbReference>
<dbReference type="SMR" id="P60004"/>
<dbReference type="STRING" id="243265.plu0121"/>
<dbReference type="GeneID" id="48846423"/>
<dbReference type="KEGG" id="plu:plu0121"/>
<dbReference type="eggNOG" id="COG0589">
    <property type="taxonomic scope" value="Bacteria"/>
</dbReference>
<dbReference type="HOGENOM" id="CLU_049301_18_0_6"/>
<dbReference type="OrthoDB" id="9792500at2"/>
<dbReference type="Proteomes" id="UP000002514">
    <property type="component" value="Chromosome"/>
</dbReference>
<dbReference type="GO" id="GO:0005737">
    <property type="term" value="C:cytoplasm"/>
    <property type="evidence" value="ECO:0007669"/>
    <property type="project" value="UniProtKB-SubCell"/>
</dbReference>
<dbReference type="CDD" id="cd23657">
    <property type="entry name" value="USP-A-like"/>
    <property type="match status" value="1"/>
</dbReference>
<dbReference type="Gene3D" id="3.40.50.620">
    <property type="entry name" value="HUPs"/>
    <property type="match status" value="1"/>
</dbReference>
<dbReference type="InterPro" id="IPR014729">
    <property type="entry name" value="Rossmann-like_a/b/a_fold"/>
</dbReference>
<dbReference type="InterPro" id="IPR006015">
    <property type="entry name" value="Universal_stress_UspA"/>
</dbReference>
<dbReference type="InterPro" id="IPR006016">
    <property type="entry name" value="UspA"/>
</dbReference>
<dbReference type="NCBIfam" id="NF011698">
    <property type="entry name" value="PRK15118.1"/>
    <property type="match status" value="1"/>
</dbReference>
<dbReference type="PANTHER" id="PTHR46268">
    <property type="entry name" value="STRESS RESPONSE PROTEIN NHAX"/>
    <property type="match status" value="1"/>
</dbReference>
<dbReference type="PANTHER" id="PTHR46268:SF23">
    <property type="entry name" value="UNIVERSAL STRESS PROTEIN A-RELATED"/>
    <property type="match status" value="1"/>
</dbReference>
<dbReference type="Pfam" id="PF00582">
    <property type="entry name" value="Usp"/>
    <property type="match status" value="1"/>
</dbReference>
<dbReference type="PIRSF" id="PIRSF006276">
    <property type="entry name" value="UspA"/>
    <property type="match status" value="1"/>
</dbReference>
<dbReference type="SUPFAM" id="SSF52402">
    <property type="entry name" value="Adenine nucleotide alpha hydrolases-like"/>
    <property type="match status" value="1"/>
</dbReference>
<gene>
    <name type="primary">uspA</name>
    <name type="ordered locus">plu0121</name>
</gene>
<comment type="function">
    <text evidence="1">Required for resistance to DNA-damaging agents.</text>
</comment>
<comment type="subunit">
    <text evidence="1">Homodimer.</text>
</comment>
<comment type="subcellular location">
    <subcellularLocation>
        <location evidence="1">Cytoplasm</location>
    </subcellularLocation>
</comment>
<comment type="similarity">
    <text evidence="2">Belongs to the universal stress protein A family.</text>
</comment>
<organism>
    <name type="scientific">Photorhabdus laumondii subsp. laumondii (strain DSM 15139 / CIP 105565 / TT01)</name>
    <name type="common">Photorhabdus luminescens subsp. laumondii</name>
    <dbReference type="NCBI Taxonomy" id="243265"/>
    <lineage>
        <taxon>Bacteria</taxon>
        <taxon>Pseudomonadati</taxon>
        <taxon>Pseudomonadota</taxon>
        <taxon>Gammaproteobacteria</taxon>
        <taxon>Enterobacterales</taxon>
        <taxon>Morganellaceae</taxon>
        <taxon>Photorhabdus</taxon>
    </lineage>
</organism>
<proteinExistence type="inferred from homology"/>
<keyword id="KW-0963">Cytoplasm</keyword>
<keyword id="KW-1185">Reference proteome</keyword>
<name>USPA_PHOLL</name>
<evidence type="ECO:0000250" key="1"/>
<evidence type="ECO:0000305" key="2"/>
<protein>
    <recommendedName>
        <fullName>Universal stress protein A</fullName>
    </recommendedName>
</protein>